<proteinExistence type="inferred from homology"/>
<organism>
    <name type="scientific">Panax ginseng</name>
    <name type="common">Korean ginseng</name>
    <dbReference type="NCBI Taxonomy" id="4054"/>
    <lineage>
        <taxon>Eukaryota</taxon>
        <taxon>Viridiplantae</taxon>
        <taxon>Streptophyta</taxon>
        <taxon>Embryophyta</taxon>
        <taxon>Tracheophyta</taxon>
        <taxon>Spermatophyta</taxon>
        <taxon>Magnoliopsida</taxon>
        <taxon>eudicotyledons</taxon>
        <taxon>Gunneridae</taxon>
        <taxon>Pentapetalae</taxon>
        <taxon>asterids</taxon>
        <taxon>campanulids</taxon>
        <taxon>Apiales</taxon>
        <taxon>Araliaceae</taxon>
        <taxon>Panax</taxon>
    </lineage>
</organism>
<name>RK14_PANGI</name>
<feature type="chain" id="PRO_0000276358" description="Large ribosomal subunit protein uL14c">
    <location>
        <begin position="1"/>
        <end position="122"/>
    </location>
</feature>
<sequence length="122" mass="13481">MIQPQTLLNVADNSGARELMCIRIIGASNRRYAHIGDVIVAVIKEAVPNMPLARSEVVRAVIVRTCKELKRDNGMIIRYDDNAAVVIDQEGNPKGTRVFGAIARELRQLNFTKIVSLAPEVL</sequence>
<dbReference type="EMBL" id="AY582139">
    <property type="protein sequence ID" value="AAT98545.1"/>
    <property type="molecule type" value="Genomic_DNA"/>
</dbReference>
<dbReference type="RefSeq" id="YP_087002.1">
    <property type="nucleotide sequence ID" value="NC_006290.1"/>
</dbReference>
<dbReference type="SMR" id="Q68RX0"/>
<dbReference type="GeneID" id="3021537"/>
<dbReference type="GO" id="GO:0009507">
    <property type="term" value="C:chloroplast"/>
    <property type="evidence" value="ECO:0007669"/>
    <property type="project" value="UniProtKB-SubCell"/>
</dbReference>
<dbReference type="GO" id="GO:0022625">
    <property type="term" value="C:cytosolic large ribosomal subunit"/>
    <property type="evidence" value="ECO:0007669"/>
    <property type="project" value="TreeGrafter"/>
</dbReference>
<dbReference type="GO" id="GO:0070180">
    <property type="term" value="F:large ribosomal subunit rRNA binding"/>
    <property type="evidence" value="ECO:0007669"/>
    <property type="project" value="TreeGrafter"/>
</dbReference>
<dbReference type="GO" id="GO:0003735">
    <property type="term" value="F:structural constituent of ribosome"/>
    <property type="evidence" value="ECO:0007669"/>
    <property type="project" value="InterPro"/>
</dbReference>
<dbReference type="GO" id="GO:0006412">
    <property type="term" value="P:translation"/>
    <property type="evidence" value="ECO:0007669"/>
    <property type="project" value="UniProtKB-UniRule"/>
</dbReference>
<dbReference type="CDD" id="cd00337">
    <property type="entry name" value="Ribosomal_uL14"/>
    <property type="match status" value="1"/>
</dbReference>
<dbReference type="FunFam" id="2.40.150.20:FF:000002">
    <property type="entry name" value="50S ribosomal protein L14, chloroplastic"/>
    <property type="match status" value="1"/>
</dbReference>
<dbReference type="Gene3D" id="2.40.150.20">
    <property type="entry name" value="Ribosomal protein L14"/>
    <property type="match status" value="1"/>
</dbReference>
<dbReference type="HAMAP" id="MF_01367">
    <property type="entry name" value="Ribosomal_uL14"/>
    <property type="match status" value="1"/>
</dbReference>
<dbReference type="InterPro" id="IPR000218">
    <property type="entry name" value="Ribosomal_uL14"/>
</dbReference>
<dbReference type="InterPro" id="IPR005745">
    <property type="entry name" value="Ribosomal_uL14_bac-type"/>
</dbReference>
<dbReference type="InterPro" id="IPR019972">
    <property type="entry name" value="Ribosomal_uL14_CS"/>
</dbReference>
<dbReference type="InterPro" id="IPR036853">
    <property type="entry name" value="Ribosomal_uL14_sf"/>
</dbReference>
<dbReference type="NCBIfam" id="TIGR01067">
    <property type="entry name" value="rplN_bact"/>
    <property type="match status" value="1"/>
</dbReference>
<dbReference type="PANTHER" id="PTHR11761">
    <property type="entry name" value="50S/60S RIBOSOMAL PROTEIN L14/L23"/>
    <property type="match status" value="1"/>
</dbReference>
<dbReference type="PANTHER" id="PTHR11761:SF3">
    <property type="entry name" value="LARGE RIBOSOMAL SUBUNIT PROTEIN UL14M"/>
    <property type="match status" value="1"/>
</dbReference>
<dbReference type="Pfam" id="PF00238">
    <property type="entry name" value="Ribosomal_L14"/>
    <property type="match status" value="1"/>
</dbReference>
<dbReference type="SMART" id="SM01374">
    <property type="entry name" value="Ribosomal_L14"/>
    <property type="match status" value="1"/>
</dbReference>
<dbReference type="SUPFAM" id="SSF50193">
    <property type="entry name" value="Ribosomal protein L14"/>
    <property type="match status" value="1"/>
</dbReference>
<dbReference type="PROSITE" id="PS00049">
    <property type="entry name" value="RIBOSOMAL_L14"/>
    <property type="match status" value="1"/>
</dbReference>
<protein>
    <recommendedName>
        <fullName evidence="1">Large ribosomal subunit protein uL14c</fullName>
    </recommendedName>
    <alternativeName>
        <fullName evidence="2">50S ribosomal protein L14, chloroplastic</fullName>
    </alternativeName>
</protein>
<geneLocation type="chloroplast"/>
<gene>
    <name evidence="1" type="primary">rpl14</name>
    <name type="ORF">PSC0820</name>
</gene>
<accession>Q68RX0</accession>
<evidence type="ECO:0000255" key="1">
    <source>
        <dbReference type="HAMAP-Rule" id="MF_01367"/>
    </source>
</evidence>
<evidence type="ECO:0000305" key="2"/>
<reference key="1">
    <citation type="journal article" date="2004" name="DNA Res.">
        <title>Complete chloroplast genome sequence from Korea ginseng (Panax schinseng Nees) and comparative analysis of sequence evolution among 17 vascular plants.</title>
        <authorList>
            <person name="Kim K.-J."/>
            <person name="Lee H.-L."/>
        </authorList>
    </citation>
    <scope>NUCLEOTIDE SEQUENCE [LARGE SCALE GENOMIC DNA]</scope>
</reference>
<comment type="function">
    <text evidence="1">Binds to 23S rRNA.</text>
</comment>
<comment type="subunit">
    <text evidence="1">Part of the 50S ribosomal subunit.</text>
</comment>
<comment type="subcellular location">
    <subcellularLocation>
        <location>Plastid</location>
        <location>Chloroplast</location>
    </subcellularLocation>
</comment>
<comment type="similarity">
    <text evidence="1">Belongs to the universal ribosomal protein uL14 family.</text>
</comment>
<keyword id="KW-0150">Chloroplast</keyword>
<keyword id="KW-0934">Plastid</keyword>
<keyword id="KW-0687">Ribonucleoprotein</keyword>
<keyword id="KW-0689">Ribosomal protein</keyword>
<keyword id="KW-0694">RNA-binding</keyword>
<keyword id="KW-0699">rRNA-binding</keyword>